<reference key="1">
    <citation type="journal article" date="2005" name="J. Gen. Virol.">
        <title>A novel class of herpesvirus with bivalve hosts.</title>
        <authorList>
            <person name="Davison A.J."/>
            <person name="Trus B.L."/>
            <person name="Cheng N."/>
            <person name="Steven A.C."/>
            <person name="Watson M.S."/>
            <person name="Cunningham C."/>
            <person name="Le Deuff R.M."/>
            <person name="Renault T."/>
        </authorList>
    </citation>
    <scope>NUCLEOTIDE SEQUENCE [LARGE SCALE GENOMIC DNA]</scope>
</reference>
<keyword id="KW-0175">Coiled coil</keyword>
<keyword id="KW-1185">Reference proteome</keyword>
<organism>
    <name type="scientific">Ostreid herpesvirus 1 (isolate France)</name>
    <name type="common">OsHV-1</name>
    <name type="synonym">Pacific oyster herpesvirus</name>
    <dbReference type="NCBI Taxonomy" id="654903"/>
    <lineage>
        <taxon>Viruses</taxon>
        <taxon>Duplodnaviria</taxon>
        <taxon>Heunggongvirae</taxon>
        <taxon>Peploviricota</taxon>
        <taxon>Herviviricetes</taxon>
        <taxon>Herpesvirales</taxon>
        <taxon>Malacoherpesviridae</taxon>
        <taxon>Ostreavirus</taxon>
        <taxon>Ostreavirus ostreidmalaco1</taxon>
        <taxon>Ostreid herpesvirus 1</taxon>
    </lineage>
</organism>
<feature type="chain" id="PRO_0000385063" description="Uncharacterized protein ORF33">
    <location>
        <begin position="1"/>
        <end position="296"/>
    </location>
</feature>
<feature type="region of interest" description="Disordered" evidence="2">
    <location>
        <begin position="165"/>
        <end position="187"/>
    </location>
</feature>
<feature type="coiled-coil region" evidence="1">
    <location>
        <begin position="129"/>
        <end position="170"/>
    </location>
</feature>
<accession>Q6R7J1</accession>
<dbReference type="EMBL" id="AY509253">
    <property type="protein sequence ID" value="AAS00924.1"/>
    <property type="molecule type" value="Genomic_DNA"/>
</dbReference>
<dbReference type="RefSeq" id="YP_024577.1">
    <property type="nucleotide sequence ID" value="NC_005881.2"/>
</dbReference>
<dbReference type="SMR" id="Q6R7J1"/>
<dbReference type="KEGG" id="vg:2948201"/>
<dbReference type="Proteomes" id="UP000007021">
    <property type="component" value="Segment"/>
</dbReference>
<protein>
    <recommendedName>
        <fullName>Uncharacterized protein ORF33</fullName>
    </recommendedName>
</protein>
<name>Y033_OSHVF</name>
<organismHost>
    <name type="scientific">Magallana gigas</name>
    <name type="common">Pacific oyster</name>
    <name type="synonym">Crassostrea gigas</name>
    <dbReference type="NCBI Taxonomy" id="29159"/>
</organismHost>
<organismHost>
    <name type="scientific">Pecten maximus</name>
    <name type="common">King scallop</name>
    <name type="synonym">Pilgrim's clam</name>
    <dbReference type="NCBI Taxonomy" id="6579"/>
</organismHost>
<proteinExistence type="predicted"/>
<evidence type="ECO:0000255" key="1"/>
<evidence type="ECO:0000256" key="2">
    <source>
        <dbReference type="SAM" id="MobiDB-lite"/>
    </source>
</evidence>
<gene>
    <name type="ORF">ORF33</name>
</gene>
<sequence>MENNAAEIYGKFIINLARYIPPGTMIDTDFRDCMSRQMKLPPLYTSASKNVYDMTKALQNRGLISSKSIDQLFSAMIKYPTLHDVMKNTFVLAEQLLTEEENIASLSLLSLEDKASTPPPKEPTLSETVKELKDLIRTVADEHMKMKREHEAAMKELTLLINNQKQQQQQPVPMPRNSTATRPKNLAIPPRPLTNQYVCEGNKVKYIIKRGQDFVKFFDYIEDDVVKTPKFLYFLKKRFNIDLTNEQARSIHMGLIFQPIYNIDGDVTEIIKMIHDLGELSVYDRLLNEYVDKIVQ</sequence>